<organism>
    <name type="scientific">Arabidopsis thaliana</name>
    <name type="common">Mouse-ear cress</name>
    <dbReference type="NCBI Taxonomy" id="3702"/>
    <lineage>
        <taxon>Eukaryota</taxon>
        <taxon>Viridiplantae</taxon>
        <taxon>Streptophyta</taxon>
        <taxon>Embryophyta</taxon>
        <taxon>Tracheophyta</taxon>
        <taxon>Spermatophyta</taxon>
        <taxon>Magnoliopsida</taxon>
        <taxon>eudicotyledons</taxon>
        <taxon>Gunneridae</taxon>
        <taxon>Pentapetalae</taxon>
        <taxon>rosids</taxon>
        <taxon>malvids</taxon>
        <taxon>Brassicales</taxon>
        <taxon>Brassicaceae</taxon>
        <taxon>Camelineae</taxon>
        <taxon>Arabidopsis</taxon>
    </lineage>
</organism>
<accession>Q9M092</accession>
<proteinExistence type="inferred from homology"/>
<protein>
    <recommendedName>
        <fullName>Wall-associated receptor kinase-like 17</fullName>
        <ecNumber>2.7.11.-</ecNumber>
    </recommendedName>
</protein>
<keyword id="KW-0067">ATP-binding</keyword>
<keyword id="KW-1015">Disulfide bond</keyword>
<keyword id="KW-0325">Glycoprotein</keyword>
<keyword id="KW-0418">Kinase</keyword>
<keyword id="KW-0472">Membrane</keyword>
<keyword id="KW-0547">Nucleotide-binding</keyword>
<keyword id="KW-0597">Phosphoprotein</keyword>
<keyword id="KW-1185">Reference proteome</keyword>
<keyword id="KW-0723">Serine/threonine-protein kinase</keyword>
<keyword id="KW-0732">Signal</keyword>
<keyword id="KW-0808">Transferase</keyword>
<keyword id="KW-0812">Transmembrane</keyword>
<keyword id="KW-1133">Transmembrane helix</keyword>
<feature type="signal peptide" evidence="3">
    <location>
        <begin position="1"/>
        <end position="30"/>
    </location>
</feature>
<feature type="chain" id="PRO_0000253317" description="Wall-associated receptor kinase-like 17">
    <location>
        <begin position="31"/>
        <end position="786"/>
    </location>
</feature>
<feature type="topological domain" description="Extracellular" evidence="3">
    <location>
        <begin position="31"/>
        <end position="369"/>
    </location>
</feature>
<feature type="transmembrane region" description="Helical" evidence="3">
    <location>
        <begin position="370"/>
        <end position="390"/>
    </location>
</feature>
<feature type="topological domain" description="Cytoplasmic" evidence="3">
    <location>
        <begin position="391"/>
        <end position="786"/>
    </location>
</feature>
<feature type="domain" description="Protein kinase" evidence="4">
    <location>
        <begin position="444"/>
        <end position="719"/>
    </location>
</feature>
<feature type="region of interest" description="Atypical EGF-like">
    <location>
        <begin position="301"/>
        <end position="362"/>
    </location>
</feature>
<feature type="region of interest" description="Disordered" evidence="6">
    <location>
        <begin position="766"/>
        <end position="786"/>
    </location>
</feature>
<feature type="compositionally biased region" description="Low complexity" evidence="6">
    <location>
        <begin position="766"/>
        <end position="775"/>
    </location>
</feature>
<feature type="active site" description="Proton acceptor" evidence="4 5">
    <location>
        <position position="570"/>
    </location>
</feature>
<feature type="binding site" evidence="4">
    <location>
        <begin position="450"/>
        <end position="458"/>
    </location>
    <ligand>
        <name>ATP</name>
        <dbReference type="ChEBI" id="CHEBI:30616"/>
    </ligand>
</feature>
<feature type="binding site" evidence="4">
    <location>
        <position position="472"/>
    </location>
    <ligand>
        <name>ATP</name>
        <dbReference type="ChEBI" id="CHEBI:30616"/>
    </ligand>
</feature>
<feature type="modified residue" description="Phosphothreonine" evidence="2">
    <location>
        <position position="433"/>
    </location>
</feature>
<feature type="modified residue" description="Phosphotyrosine" evidence="2">
    <location>
        <position position="517"/>
    </location>
</feature>
<feature type="modified residue" description="Phosphothreonine" evidence="2">
    <location>
        <position position="604"/>
    </location>
</feature>
<feature type="modified residue" description="Phosphothreonine" evidence="2">
    <location>
        <position position="609"/>
    </location>
</feature>
<feature type="modified residue" description="Phosphotyrosine" evidence="2">
    <location>
        <position position="617"/>
    </location>
</feature>
<feature type="glycosylation site" description="N-linked (GlcNAc...) asparagine" evidence="3">
    <location>
        <position position="69"/>
    </location>
</feature>
<feature type="glycosylation site" description="N-linked (GlcNAc...) asparagine" evidence="3">
    <location>
        <position position="122"/>
    </location>
</feature>
<feature type="glycosylation site" description="N-linked (GlcNAc...) asparagine" evidence="3">
    <location>
        <position position="160"/>
    </location>
</feature>
<feature type="glycosylation site" description="N-linked (GlcNAc...) asparagine" evidence="3">
    <location>
        <position position="165"/>
    </location>
</feature>
<feature type="glycosylation site" description="N-linked (GlcNAc...) asparagine" evidence="3">
    <location>
        <position position="274"/>
    </location>
</feature>
<feature type="disulfide bond" evidence="1">
    <location>
        <begin position="303"/>
        <end position="318"/>
    </location>
</feature>
<feature type="disulfide bond" evidence="1">
    <location>
        <begin position="340"/>
        <end position="353"/>
    </location>
</feature>
<feature type="disulfide bond" evidence="1">
    <location>
        <begin position="347"/>
        <end position="362"/>
    </location>
</feature>
<sequence length="786" mass="87304">MSYKNTNNSHLILFKLLLLLILYSADLTASSSCRSECGGCKCGGIAIPYPFGIGKGCYLEKSYEIECLNTSGKLVPFLSVISKEVVSIHLPGRQSFGSVRVRSPITSAGCSSDGKDSAPVMNLTDSPFFVSDINNLVGVGCSSKVSLEHIKQNMVGCELNCSTTNASDSNSIPFFDKTGCSFSYTFAQVCTGNKPEDMGCDGRGCCQASLPREPQQVIGIRIESNDGKSTTSGDCRVAFLTDEFFSLSKLTKPEQLHAKRYATLSLGWIMQTRNTSFVNSLACKIRKDTDTAYSNDQSIKCICDYTMSIISDIRYANCECNLGYKGNPYDSDGCRDIDECKENPKYCKETDTCVNFEGGYRCVGDKTKAIMIGAGTGFGVLVLVGGVWWLRKFLVKRRMAKRKKKFFKRNGGLLLQQELNTRQGVVEKARIFTSKELEKATENFSENRVLGHGGQGTVYKGMLVDGRTVAVKKSKVIDEDKLQEFINEVVILSQINHRHVVKLLGCCLETEVPILVYEFIINGNLFKHIHEEEADDYTMIWGMRLRIAVDIAGALSYLHSAASSPIYHRDIKSTNILLDEKYRAKVADFGTSRSVTIDQTHWTTVISGTVGYVDPEYYRSSQYTEKSDVYSFGVILAELITGDKPVIMVQNTQEIIALAEHFRVAMKERRLSDIMDARIRDDSKPEQVMAVANLAMKCLSSRGRNRPNMREVFTELERICTSPEDSQVQNRIDEEEEEDGVEEEEEVVTIVHRGDSWSIGVTAPASSIVASPPSSDVEPLNPLLTW</sequence>
<name>WAKLM_ARATH</name>
<comment type="function">
    <text>Serine/threonine-protein kinase that may function as a signaling receptor of extracellular matrix component.</text>
</comment>
<comment type="catalytic activity">
    <reaction>
        <text>L-seryl-[protein] + ATP = O-phospho-L-seryl-[protein] + ADP + H(+)</text>
        <dbReference type="Rhea" id="RHEA:17989"/>
        <dbReference type="Rhea" id="RHEA-COMP:9863"/>
        <dbReference type="Rhea" id="RHEA-COMP:11604"/>
        <dbReference type="ChEBI" id="CHEBI:15378"/>
        <dbReference type="ChEBI" id="CHEBI:29999"/>
        <dbReference type="ChEBI" id="CHEBI:30616"/>
        <dbReference type="ChEBI" id="CHEBI:83421"/>
        <dbReference type="ChEBI" id="CHEBI:456216"/>
    </reaction>
</comment>
<comment type="catalytic activity">
    <reaction>
        <text>L-threonyl-[protein] + ATP = O-phospho-L-threonyl-[protein] + ADP + H(+)</text>
        <dbReference type="Rhea" id="RHEA:46608"/>
        <dbReference type="Rhea" id="RHEA-COMP:11060"/>
        <dbReference type="Rhea" id="RHEA-COMP:11605"/>
        <dbReference type="ChEBI" id="CHEBI:15378"/>
        <dbReference type="ChEBI" id="CHEBI:30013"/>
        <dbReference type="ChEBI" id="CHEBI:30616"/>
        <dbReference type="ChEBI" id="CHEBI:61977"/>
        <dbReference type="ChEBI" id="CHEBI:456216"/>
    </reaction>
</comment>
<comment type="subcellular location">
    <subcellularLocation>
        <location evidence="7">Membrane</location>
        <topology evidence="7">Single-pass type I membrane protein</topology>
    </subcellularLocation>
</comment>
<comment type="domain">
    <text>The EGF-like region is specific to this family of proteins and seems to consist of the C-terminal of an EGF-like domain fused to the N-terminal of another one.</text>
</comment>
<comment type="similarity">
    <text evidence="4">Belongs to the protein kinase superfamily. Ser/Thr protein kinase family.</text>
</comment>
<comment type="sequence caution" evidence="7">
    <conflict type="erroneous gene model prediction">
        <sequence resource="EMBL-CDS" id="CAB79828"/>
    </conflict>
</comment>
<dbReference type="EC" id="2.7.11.-"/>
<dbReference type="EMBL" id="AL049914">
    <property type="status" value="NOT_ANNOTATED_CDS"/>
    <property type="molecule type" value="Genomic_DNA"/>
</dbReference>
<dbReference type="EMBL" id="AL161578">
    <property type="protein sequence ID" value="CAB79828.1"/>
    <property type="status" value="ALT_SEQ"/>
    <property type="molecule type" value="Genomic_DNA"/>
</dbReference>
<dbReference type="EMBL" id="CP002687">
    <property type="protein sequence ID" value="AEE85856.1"/>
    <property type="molecule type" value="Genomic_DNA"/>
</dbReference>
<dbReference type="PIR" id="T10664">
    <property type="entry name" value="T10664"/>
</dbReference>
<dbReference type="RefSeq" id="NP_194839.2">
    <property type="nucleotide sequence ID" value="NM_119260.4"/>
</dbReference>
<dbReference type="SMR" id="Q9M092"/>
<dbReference type="BioGRID" id="14524">
    <property type="interactions" value="3"/>
</dbReference>
<dbReference type="FunCoup" id="Q9M092">
    <property type="interactions" value="10"/>
</dbReference>
<dbReference type="IntAct" id="Q9M092">
    <property type="interactions" value="2"/>
</dbReference>
<dbReference type="STRING" id="3702.Q9M092"/>
<dbReference type="GlyCosmos" id="Q9M092">
    <property type="glycosylation" value="5 sites, No reported glycans"/>
</dbReference>
<dbReference type="GlyGen" id="Q9M092">
    <property type="glycosylation" value="5 sites"/>
</dbReference>
<dbReference type="iPTMnet" id="Q9M092"/>
<dbReference type="PaxDb" id="3702-AT4G31100.1"/>
<dbReference type="ProteomicsDB" id="242572"/>
<dbReference type="EnsemblPlants" id="AT4G31100.1">
    <property type="protein sequence ID" value="AT4G31100.1"/>
    <property type="gene ID" value="AT4G31100"/>
</dbReference>
<dbReference type="GeneID" id="829237"/>
<dbReference type="Gramene" id="AT4G31100.1">
    <property type="protein sequence ID" value="AT4G31100.1"/>
    <property type="gene ID" value="AT4G31100"/>
</dbReference>
<dbReference type="KEGG" id="ath:AT4G31100"/>
<dbReference type="Araport" id="AT4G31100"/>
<dbReference type="TAIR" id="AT4G31100"/>
<dbReference type="eggNOG" id="ENOG502RMXX">
    <property type="taxonomic scope" value="Eukaryota"/>
</dbReference>
<dbReference type="HOGENOM" id="CLU_000288_43_5_1"/>
<dbReference type="InParanoid" id="Q9M092"/>
<dbReference type="OMA" id="RYANCEC"/>
<dbReference type="PhylomeDB" id="Q9M092"/>
<dbReference type="PRO" id="PR:Q9M092"/>
<dbReference type="Proteomes" id="UP000006548">
    <property type="component" value="Chromosome 4"/>
</dbReference>
<dbReference type="ExpressionAtlas" id="Q9M092">
    <property type="expression patterns" value="baseline and differential"/>
</dbReference>
<dbReference type="GO" id="GO:0016020">
    <property type="term" value="C:membrane"/>
    <property type="evidence" value="ECO:0007669"/>
    <property type="project" value="UniProtKB-SubCell"/>
</dbReference>
<dbReference type="GO" id="GO:0005524">
    <property type="term" value="F:ATP binding"/>
    <property type="evidence" value="ECO:0007669"/>
    <property type="project" value="UniProtKB-KW"/>
</dbReference>
<dbReference type="GO" id="GO:0005509">
    <property type="term" value="F:calcium ion binding"/>
    <property type="evidence" value="ECO:0007669"/>
    <property type="project" value="InterPro"/>
</dbReference>
<dbReference type="GO" id="GO:0106310">
    <property type="term" value="F:protein serine kinase activity"/>
    <property type="evidence" value="ECO:0007669"/>
    <property type="project" value="RHEA"/>
</dbReference>
<dbReference type="GO" id="GO:0004674">
    <property type="term" value="F:protein serine/threonine kinase activity"/>
    <property type="evidence" value="ECO:0007669"/>
    <property type="project" value="UniProtKB-KW"/>
</dbReference>
<dbReference type="GO" id="GO:0007166">
    <property type="term" value="P:cell surface receptor signaling pathway"/>
    <property type="evidence" value="ECO:0007669"/>
    <property type="project" value="InterPro"/>
</dbReference>
<dbReference type="CDD" id="cd00054">
    <property type="entry name" value="EGF_CA"/>
    <property type="match status" value="1"/>
</dbReference>
<dbReference type="FunFam" id="1.10.510.10:FF:000084">
    <property type="entry name" value="Wall-associated receptor kinase 2"/>
    <property type="match status" value="1"/>
</dbReference>
<dbReference type="FunFam" id="3.30.200.20:FF:000043">
    <property type="entry name" value="Wall-associated receptor kinase 2"/>
    <property type="match status" value="1"/>
</dbReference>
<dbReference type="Gene3D" id="2.10.25.10">
    <property type="entry name" value="Laminin"/>
    <property type="match status" value="1"/>
</dbReference>
<dbReference type="Gene3D" id="3.30.200.20">
    <property type="entry name" value="Phosphorylase Kinase, domain 1"/>
    <property type="match status" value="1"/>
</dbReference>
<dbReference type="Gene3D" id="1.10.510.10">
    <property type="entry name" value="Transferase(Phosphotransferase) domain 1"/>
    <property type="match status" value="1"/>
</dbReference>
<dbReference type="InterPro" id="IPR018097">
    <property type="entry name" value="EGF_Ca-bd_CS"/>
</dbReference>
<dbReference type="InterPro" id="IPR011009">
    <property type="entry name" value="Kinase-like_dom_sf"/>
</dbReference>
<dbReference type="InterPro" id="IPR049883">
    <property type="entry name" value="NOTCH1_EGF-like"/>
</dbReference>
<dbReference type="InterPro" id="IPR000719">
    <property type="entry name" value="Prot_kinase_dom"/>
</dbReference>
<dbReference type="InterPro" id="IPR008271">
    <property type="entry name" value="Ser/Thr_kinase_AS"/>
</dbReference>
<dbReference type="InterPro" id="IPR013695">
    <property type="entry name" value="WAK"/>
</dbReference>
<dbReference type="InterPro" id="IPR045274">
    <property type="entry name" value="WAK-like"/>
</dbReference>
<dbReference type="PANTHER" id="PTHR27005:SF297">
    <property type="entry name" value="WALL-ASSOCIATED RECEPTOR KINASE-LIKE 17-RELATED"/>
    <property type="match status" value="1"/>
</dbReference>
<dbReference type="PANTHER" id="PTHR27005">
    <property type="entry name" value="WALL-ASSOCIATED RECEPTOR KINASE-LIKE 21"/>
    <property type="match status" value="1"/>
</dbReference>
<dbReference type="Pfam" id="PF07645">
    <property type="entry name" value="EGF_CA"/>
    <property type="match status" value="1"/>
</dbReference>
<dbReference type="Pfam" id="PF00069">
    <property type="entry name" value="Pkinase"/>
    <property type="match status" value="1"/>
</dbReference>
<dbReference type="Pfam" id="PF08488">
    <property type="entry name" value="WAK"/>
    <property type="match status" value="1"/>
</dbReference>
<dbReference type="SMART" id="SM00220">
    <property type="entry name" value="S_TKc"/>
    <property type="match status" value="1"/>
</dbReference>
<dbReference type="SUPFAM" id="SSF56112">
    <property type="entry name" value="Protein kinase-like (PK-like)"/>
    <property type="match status" value="1"/>
</dbReference>
<dbReference type="PROSITE" id="PS01187">
    <property type="entry name" value="EGF_CA"/>
    <property type="match status" value="1"/>
</dbReference>
<dbReference type="PROSITE" id="PS50011">
    <property type="entry name" value="PROTEIN_KINASE_DOM"/>
    <property type="match status" value="1"/>
</dbReference>
<dbReference type="PROSITE" id="PS00108">
    <property type="entry name" value="PROTEIN_KINASE_ST"/>
    <property type="match status" value="1"/>
</dbReference>
<evidence type="ECO:0000250" key="1"/>
<evidence type="ECO:0000250" key="2">
    <source>
        <dbReference type="UniProtKB" id="O48814"/>
    </source>
</evidence>
<evidence type="ECO:0000255" key="3"/>
<evidence type="ECO:0000255" key="4">
    <source>
        <dbReference type="PROSITE-ProRule" id="PRU00159"/>
    </source>
</evidence>
<evidence type="ECO:0000255" key="5">
    <source>
        <dbReference type="PROSITE-ProRule" id="PRU10027"/>
    </source>
</evidence>
<evidence type="ECO:0000256" key="6">
    <source>
        <dbReference type="SAM" id="MobiDB-lite"/>
    </source>
</evidence>
<evidence type="ECO:0000305" key="7"/>
<reference key="1">
    <citation type="journal article" date="1999" name="Nature">
        <title>Sequence and analysis of chromosome 4 of the plant Arabidopsis thaliana.</title>
        <authorList>
            <person name="Mayer K.F.X."/>
            <person name="Schueller C."/>
            <person name="Wambutt R."/>
            <person name="Murphy G."/>
            <person name="Volckaert G."/>
            <person name="Pohl T."/>
            <person name="Duesterhoeft A."/>
            <person name="Stiekema W."/>
            <person name="Entian K.-D."/>
            <person name="Terryn N."/>
            <person name="Harris B."/>
            <person name="Ansorge W."/>
            <person name="Brandt P."/>
            <person name="Grivell L.A."/>
            <person name="Rieger M."/>
            <person name="Weichselgartner M."/>
            <person name="de Simone V."/>
            <person name="Obermaier B."/>
            <person name="Mache R."/>
            <person name="Mueller M."/>
            <person name="Kreis M."/>
            <person name="Delseny M."/>
            <person name="Puigdomenech P."/>
            <person name="Watson M."/>
            <person name="Schmidtheini T."/>
            <person name="Reichert B."/>
            <person name="Portetelle D."/>
            <person name="Perez-Alonso M."/>
            <person name="Boutry M."/>
            <person name="Bancroft I."/>
            <person name="Vos P."/>
            <person name="Hoheisel J."/>
            <person name="Zimmermann W."/>
            <person name="Wedler H."/>
            <person name="Ridley P."/>
            <person name="Langham S.-A."/>
            <person name="McCullagh B."/>
            <person name="Bilham L."/>
            <person name="Robben J."/>
            <person name="van der Schueren J."/>
            <person name="Grymonprez B."/>
            <person name="Chuang Y.-J."/>
            <person name="Vandenbussche F."/>
            <person name="Braeken M."/>
            <person name="Weltjens I."/>
            <person name="Voet M."/>
            <person name="Bastiaens I."/>
            <person name="Aert R."/>
            <person name="Defoor E."/>
            <person name="Weitzenegger T."/>
            <person name="Bothe G."/>
            <person name="Ramsperger U."/>
            <person name="Hilbert H."/>
            <person name="Braun M."/>
            <person name="Holzer E."/>
            <person name="Brandt A."/>
            <person name="Peters S."/>
            <person name="van Staveren M."/>
            <person name="Dirkse W."/>
            <person name="Mooijman P."/>
            <person name="Klein Lankhorst R."/>
            <person name="Rose M."/>
            <person name="Hauf J."/>
            <person name="Koetter P."/>
            <person name="Berneiser S."/>
            <person name="Hempel S."/>
            <person name="Feldpausch M."/>
            <person name="Lamberth S."/>
            <person name="Van den Daele H."/>
            <person name="De Keyser A."/>
            <person name="Buysshaert C."/>
            <person name="Gielen J."/>
            <person name="Villarroel R."/>
            <person name="De Clercq R."/>
            <person name="van Montagu M."/>
            <person name="Rogers J."/>
            <person name="Cronin A."/>
            <person name="Quail M.A."/>
            <person name="Bray-Allen S."/>
            <person name="Clark L."/>
            <person name="Doggett J."/>
            <person name="Hall S."/>
            <person name="Kay M."/>
            <person name="Lennard N."/>
            <person name="McLay K."/>
            <person name="Mayes R."/>
            <person name="Pettett A."/>
            <person name="Rajandream M.A."/>
            <person name="Lyne M."/>
            <person name="Benes V."/>
            <person name="Rechmann S."/>
            <person name="Borkova D."/>
            <person name="Bloecker H."/>
            <person name="Scharfe M."/>
            <person name="Grimm M."/>
            <person name="Loehnert T.-H."/>
            <person name="Dose S."/>
            <person name="de Haan M."/>
            <person name="Maarse A.C."/>
            <person name="Schaefer M."/>
            <person name="Mueller-Auer S."/>
            <person name="Gabel C."/>
            <person name="Fuchs M."/>
            <person name="Fartmann B."/>
            <person name="Granderath K."/>
            <person name="Dauner D."/>
            <person name="Herzl A."/>
            <person name="Neumann S."/>
            <person name="Argiriou A."/>
            <person name="Vitale D."/>
            <person name="Liguori R."/>
            <person name="Piravandi E."/>
            <person name="Massenet O."/>
            <person name="Quigley F."/>
            <person name="Clabauld G."/>
            <person name="Muendlein A."/>
            <person name="Felber R."/>
            <person name="Schnabl S."/>
            <person name="Hiller R."/>
            <person name="Schmidt W."/>
            <person name="Lecharny A."/>
            <person name="Aubourg S."/>
            <person name="Chefdor F."/>
            <person name="Cooke R."/>
            <person name="Berger C."/>
            <person name="Monfort A."/>
            <person name="Casacuberta E."/>
            <person name="Gibbons T."/>
            <person name="Weber N."/>
            <person name="Vandenbol M."/>
            <person name="Bargues M."/>
            <person name="Terol J."/>
            <person name="Torres A."/>
            <person name="Perez-Perez A."/>
            <person name="Purnelle B."/>
            <person name="Bent E."/>
            <person name="Johnson S."/>
            <person name="Tacon D."/>
            <person name="Jesse T."/>
            <person name="Heijnen L."/>
            <person name="Schwarz S."/>
            <person name="Scholler P."/>
            <person name="Heber S."/>
            <person name="Francs P."/>
            <person name="Bielke C."/>
            <person name="Frishman D."/>
            <person name="Haase D."/>
            <person name="Lemcke K."/>
            <person name="Mewes H.-W."/>
            <person name="Stocker S."/>
            <person name="Zaccaria P."/>
            <person name="Bevan M."/>
            <person name="Wilson R.K."/>
            <person name="de la Bastide M."/>
            <person name="Habermann K."/>
            <person name="Parnell L."/>
            <person name="Dedhia N."/>
            <person name="Gnoj L."/>
            <person name="Schutz K."/>
            <person name="Huang E."/>
            <person name="Spiegel L."/>
            <person name="Sekhon M."/>
            <person name="Murray J."/>
            <person name="Sheet P."/>
            <person name="Cordes M."/>
            <person name="Abu-Threideh J."/>
            <person name="Stoneking T."/>
            <person name="Kalicki J."/>
            <person name="Graves T."/>
            <person name="Harmon G."/>
            <person name="Edwards J."/>
            <person name="Latreille P."/>
            <person name="Courtney L."/>
            <person name="Cloud J."/>
            <person name="Abbott A."/>
            <person name="Scott K."/>
            <person name="Johnson D."/>
            <person name="Minx P."/>
            <person name="Bentley D."/>
            <person name="Fulton B."/>
            <person name="Miller N."/>
            <person name="Greco T."/>
            <person name="Kemp K."/>
            <person name="Kramer J."/>
            <person name="Fulton L."/>
            <person name="Mardis E."/>
            <person name="Dante M."/>
            <person name="Pepin K."/>
            <person name="Hillier L.W."/>
            <person name="Nelson J."/>
            <person name="Spieth J."/>
            <person name="Ryan E."/>
            <person name="Andrews S."/>
            <person name="Geisel C."/>
            <person name="Layman D."/>
            <person name="Du H."/>
            <person name="Ali J."/>
            <person name="Berghoff A."/>
            <person name="Jones K."/>
            <person name="Drone K."/>
            <person name="Cotton M."/>
            <person name="Joshu C."/>
            <person name="Antonoiu B."/>
            <person name="Zidanic M."/>
            <person name="Strong C."/>
            <person name="Sun H."/>
            <person name="Lamar B."/>
            <person name="Yordan C."/>
            <person name="Ma P."/>
            <person name="Zhong J."/>
            <person name="Preston R."/>
            <person name="Vil D."/>
            <person name="Shekher M."/>
            <person name="Matero A."/>
            <person name="Shah R."/>
            <person name="Swaby I.K."/>
            <person name="O'Shaughnessy A."/>
            <person name="Rodriguez M."/>
            <person name="Hoffman J."/>
            <person name="Till S."/>
            <person name="Granat S."/>
            <person name="Shohdy N."/>
            <person name="Hasegawa A."/>
            <person name="Hameed A."/>
            <person name="Lodhi M."/>
            <person name="Johnson A."/>
            <person name="Chen E."/>
            <person name="Marra M.A."/>
            <person name="Martienssen R."/>
            <person name="McCombie W.R."/>
        </authorList>
    </citation>
    <scope>NUCLEOTIDE SEQUENCE [LARGE SCALE GENOMIC DNA]</scope>
    <source>
        <strain>cv. Columbia</strain>
    </source>
</reference>
<reference key="2">
    <citation type="journal article" date="2017" name="Plant J.">
        <title>Araport11: a complete reannotation of the Arabidopsis thaliana reference genome.</title>
        <authorList>
            <person name="Cheng C.Y."/>
            <person name="Krishnakumar V."/>
            <person name="Chan A.P."/>
            <person name="Thibaud-Nissen F."/>
            <person name="Schobel S."/>
            <person name="Town C.D."/>
        </authorList>
    </citation>
    <scope>GENOME REANNOTATION</scope>
    <source>
        <strain>cv. Columbia</strain>
    </source>
</reference>
<reference key="3">
    <citation type="journal article" date="2002" name="Plant Physiol.">
        <title>The cell wall-associated kinase (WAK) and WAK-like kinase gene family.</title>
        <authorList>
            <person name="Verica J.A."/>
            <person name="He Z.-H."/>
        </authorList>
    </citation>
    <scope>GENE FAMILY ORGANIZATION</scope>
</reference>
<gene>
    <name type="primary">WAKL17</name>
    <name type="ordered locus">At4g31100</name>
    <name type="ORF">F6E21.20</name>
</gene>